<dbReference type="EMBL" id="AF447807">
    <property type="protein sequence ID" value="AAN09793.1"/>
    <property type="molecule type" value="Genomic_DNA"/>
</dbReference>
<dbReference type="RefSeq" id="NP_001009101.1">
    <property type="nucleotide sequence ID" value="NM_001009101.1"/>
</dbReference>
<dbReference type="SMR" id="P60018"/>
<dbReference type="FunCoup" id="P60018">
    <property type="interactions" value="177"/>
</dbReference>
<dbReference type="STRING" id="9598.ENSPTRP00000079201"/>
<dbReference type="GlyCosmos" id="P60018">
    <property type="glycosylation" value="3 sites, No reported glycans"/>
</dbReference>
<dbReference type="PaxDb" id="9598-ENSPTRP00000056517"/>
<dbReference type="GeneID" id="462489"/>
<dbReference type="KEGG" id="ptr:462489"/>
<dbReference type="CTD" id="3077"/>
<dbReference type="eggNOG" id="KOG1745">
    <property type="taxonomic scope" value="Eukaryota"/>
</dbReference>
<dbReference type="InParanoid" id="P60018"/>
<dbReference type="OrthoDB" id="10038at9604"/>
<dbReference type="Proteomes" id="UP000002277">
    <property type="component" value="Unplaced"/>
</dbReference>
<dbReference type="GO" id="GO:0009897">
    <property type="term" value="C:external side of plasma membrane"/>
    <property type="evidence" value="ECO:0000318"/>
    <property type="project" value="GO_Central"/>
</dbReference>
<dbReference type="GO" id="GO:0005615">
    <property type="term" value="C:extracellular space"/>
    <property type="evidence" value="ECO:0000318"/>
    <property type="project" value="GO_Central"/>
</dbReference>
<dbReference type="GO" id="GO:1990459">
    <property type="term" value="F:transferrin receptor binding"/>
    <property type="evidence" value="ECO:0000318"/>
    <property type="project" value="GO_Central"/>
</dbReference>
<dbReference type="GO" id="GO:0006826">
    <property type="term" value="P:iron ion transport"/>
    <property type="evidence" value="ECO:0007669"/>
    <property type="project" value="UniProtKB-KW"/>
</dbReference>
<dbReference type="GO" id="GO:0034756">
    <property type="term" value="P:regulation of iron ion transport"/>
    <property type="evidence" value="ECO:0000318"/>
    <property type="project" value="GO_Central"/>
</dbReference>
<dbReference type="GO" id="GO:1990641">
    <property type="term" value="P:response to iron ion starvation"/>
    <property type="evidence" value="ECO:0000318"/>
    <property type="project" value="GO_Central"/>
</dbReference>
<dbReference type="CDD" id="cd21021">
    <property type="entry name" value="IgC1_MHC_Ib_HLA-H"/>
    <property type="match status" value="1"/>
</dbReference>
<dbReference type="FunFam" id="3.30.500.10:FF:000001">
    <property type="entry name" value="H-2 class I histocompatibility antigen, alpha chain"/>
    <property type="match status" value="1"/>
</dbReference>
<dbReference type="FunFam" id="2.60.40.10:FF:000204">
    <property type="entry name" value="Major histocompatibility complex, class I-related protein"/>
    <property type="match status" value="1"/>
</dbReference>
<dbReference type="Gene3D" id="2.60.40.10">
    <property type="entry name" value="Immunoglobulins"/>
    <property type="match status" value="1"/>
</dbReference>
<dbReference type="Gene3D" id="3.30.500.10">
    <property type="entry name" value="MHC class I-like antigen recognition-like"/>
    <property type="match status" value="1"/>
</dbReference>
<dbReference type="InterPro" id="IPR007110">
    <property type="entry name" value="Ig-like_dom"/>
</dbReference>
<dbReference type="InterPro" id="IPR036179">
    <property type="entry name" value="Ig-like_dom_sf"/>
</dbReference>
<dbReference type="InterPro" id="IPR013783">
    <property type="entry name" value="Ig-like_fold"/>
</dbReference>
<dbReference type="InterPro" id="IPR003006">
    <property type="entry name" value="Ig/MHC_CS"/>
</dbReference>
<dbReference type="InterPro" id="IPR003597">
    <property type="entry name" value="Ig_C1-set"/>
</dbReference>
<dbReference type="InterPro" id="IPR050208">
    <property type="entry name" value="MHC_class-I_related"/>
</dbReference>
<dbReference type="InterPro" id="IPR011161">
    <property type="entry name" value="MHC_I-like_Ag-recog"/>
</dbReference>
<dbReference type="InterPro" id="IPR037055">
    <property type="entry name" value="MHC_I-like_Ag-recog_sf"/>
</dbReference>
<dbReference type="InterPro" id="IPR011162">
    <property type="entry name" value="MHC_I/II-like_Ag-recog"/>
</dbReference>
<dbReference type="InterPro" id="IPR001039">
    <property type="entry name" value="MHC_I_a_a1/a2"/>
</dbReference>
<dbReference type="PANTHER" id="PTHR16675:SF172">
    <property type="entry name" value="HEREDITARY HEMOCHROMATOSIS PROTEIN"/>
    <property type="match status" value="1"/>
</dbReference>
<dbReference type="PANTHER" id="PTHR16675">
    <property type="entry name" value="MHC CLASS I-RELATED"/>
    <property type="match status" value="1"/>
</dbReference>
<dbReference type="Pfam" id="PF07654">
    <property type="entry name" value="C1-set"/>
    <property type="match status" value="1"/>
</dbReference>
<dbReference type="Pfam" id="PF00129">
    <property type="entry name" value="MHC_I"/>
    <property type="match status" value="1"/>
</dbReference>
<dbReference type="PRINTS" id="PR01638">
    <property type="entry name" value="MHCCLASSI"/>
</dbReference>
<dbReference type="SMART" id="SM00407">
    <property type="entry name" value="IGc1"/>
    <property type="match status" value="1"/>
</dbReference>
<dbReference type="SUPFAM" id="SSF48726">
    <property type="entry name" value="Immunoglobulin"/>
    <property type="match status" value="1"/>
</dbReference>
<dbReference type="SUPFAM" id="SSF54452">
    <property type="entry name" value="MHC antigen-recognition domain"/>
    <property type="match status" value="1"/>
</dbReference>
<dbReference type="PROSITE" id="PS50835">
    <property type="entry name" value="IG_LIKE"/>
    <property type="match status" value="1"/>
</dbReference>
<dbReference type="PROSITE" id="PS00290">
    <property type="entry name" value="IG_MHC"/>
    <property type="match status" value="1"/>
</dbReference>
<reference key="1">
    <citation type="journal article" date="2002" name="Genetics">
        <title>Sequence variation and haplotype structure at the Human HFE Locus.</title>
        <authorList>
            <person name="Toomajian C."/>
            <person name="Kreitman M."/>
        </authorList>
    </citation>
    <scope>NUCLEOTIDE SEQUENCE [GENOMIC DNA]</scope>
</reference>
<keyword id="KW-1003">Cell membrane</keyword>
<keyword id="KW-1015">Disulfide bond</keyword>
<keyword id="KW-0325">Glycoprotein</keyword>
<keyword id="KW-0406">Ion transport</keyword>
<keyword id="KW-0408">Iron</keyword>
<keyword id="KW-0410">Iron transport</keyword>
<keyword id="KW-0472">Membrane</keyword>
<keyword id="KW-1185">Reference proteome</keyword>
<keyword id="KW-0732">Signal</keyword>
<keyword id="KW-0812">Transmembrane</keyword>
<keyword id="KW-1133">Transmembrane helix</keyword>
<keyword id="KW-0813">Transport</keyword>
<gene>
    <name type="primary">HFE</name>
    <name type="synonym">Patr-H</name>
</gene>
<accession>P60018</accession>
<comment type="function">
    <text evidence="2">Binds to transferrin receptor (TFR) and reduces its affinity for iron-loaded transferrin.</text>
</comment>
<comment type="subunit">
    <text evidence="2">Binds TFR through the extracellular domain in a pH-dependent manner.</text>
</comment>
<comment type="subcellular location">
    <subcellularLocation>
        <location evidence="2">Cell membrane</location>
        <topology evidence="2">Single-pass type I membrane protein</topology>
    </subcellularLocation>
</comment>
<comment type="similarity">
    <text evidence="5">Belongs to the MHC class I family.</text>
</comment>
<feature type="signal peptide" evidence="1">
    <location>
        <begin position="1"/>
        <end position="22"/>
    </location>
</feature>
<feature type="chain" id="PRO_0000018893" description="Hereditary hemochromatosis protein homolog">
    <location>
        <begin position="23"/>
        <end position="348"/>
    </location>
</feature>
<feature type="topological domain" description="Extracellular" evidence="2">
    <location>
        <begin position="23"/>
        <end position="306"/>
    </location>
</feature>
<feature type="transmembrane region" description="Helical" evidence="3">
    <location>
        <begin position="307"/>
        <end position="330"/>
    </location>
</feature>
<feature type="topological domain" description="Cytoplasmic" evidence="2">
    <location>
        <begin position="331"/>
        <end position="348"/>
    </location>
</feature>
<feature type="domain" description="Ig-like C1-type">
    <location>
        <begin position="207"/>
        <end position="298"/>
    </location>
</feature>
<feature type="region of interest" description="Alpha-1">
    <location>
        <begin position="23"/>
        <end position="114"/>
    </location>
</feature>
<feature type="region of interest" description="Alpha-2">
    <location>
        <begin position="115"/>
        <end position="205"/>
    </location>
</feature>
<feature type="region of interest" description="Alpha-3">
    <location>
        <begin position="206"/>
        <end position="297"/>
    </location>
</feature>
<feature type="region of interest" description="Connecting peptide">
    <location>
        <begin position="298"/>
        <end position="306"/>
    </location>
</feature>
<feature type="glycosylation site" description="N-linked (GlcNAc...) asparagine" evidence="3">
    <location>
        <position position="110"/>
    </location>
</feature>
<feature type="glycosylation site" description="N-linked (GlcNAc...) asparagine" evidence="3">
    <location>
        <position position="130"/>
    </location>
</feature>
<feature type="glycosylation site" description="N-linked (GlcNAc...) asparagine" evidence="3">
    <location>
        <position position="234"/>
    </location>
</feature>
<feature type="disulfide bond" evidence="4">
    <location>
        <begin position="124"/>
        <end position="187"/>
    </location>
</feature>
<feature type="disulfide bond" evidence="4">
    <location>
        <begin position="225"/>
        <end position="282"/>
    </location>
</feature>
<evidence type="ECO:0000250" key="1"/>
<evidence type="ECO:0000250" key="2">
    <source>
        <dbReference type="UniProtKB" id="Q30201"/>
    </source>
</evidence>
<evidence type="ECO:0000255" key="3"/>
<evidence type="ECO:0000255" key="4">
    <source>
        <dbReference type="PROSITE-ProRule" id="PRU00114"/>
    </source>
</evidence>
<evidence type="ECO:0000305" key="5"/>
<organism>
    <name type="scientific">Pan troglodytes</name>
    <name type="common">Chimpanzee</name>
    <dbReference type="NCBI Taxonomy" id="9598"/>
    <lineage>
        <taxon>Eukaryota</taxon>
        <taxon>Metazoa</taxon>
        <taxon>Chordata</taxon>
        <taxon>Craniata</taxon>
        <taxon>Vertebrata</taxon>
        <taxon>Euteleostomi</taxon>
        <taxon>Mammalia</taxon>
        <taxon>Eutheria</taxon>
        <taxon>Euarchontoglires</taxon>
        <taxon>Primates</taxon>
        <taxon>Haplorrhini</taxon>
        <taxon>Catarrhini</taxon>
        <taxon>Hominidae</taxon>
        <taxon>Pan</taxon>
    </lineage>
</organism>
<protein>
    <recommendedName>
        <fullName>Hereditary hemochromatosis protein homolog</fullName>
    </recommendedName>
</protein>
<name>HFE_PANTR</name>
<sequence length="348" mass="40108">MGPRARPALLLLMLLQTAVLQGRLLRSHSLHYLFMGASEQDLGLSLFEALGYVDDQLFVFYDHESRRVEPRTPWVSSRISSQMWLQLSQSLKGWDHMFTVDFWTIMENHNHSKESHTLQVILGCEMQEDNSTEGYWKYGYDGQDHLEFCPDTLDWRAAEPRAWPTKLEWERHKIRARQNRAYLERDCPAQLQQLLELGRGVLDQQVPPLVKVTHHVTSSVTTLRCRALNYYPQNITMKWLKDKQPMDAKEFEPKDVLPNGDGTYQGWITLAVPPGEEQRYTCQVEHPGLDQPLIVIWEPSPSGTLVIGVISGIAVFVVILFIGILFIILRKRQGSRGAMGHYVLAERE</sequence>
<proteinExistence type="inferred from homology"/>